<accession>Q9AC25</accession>
<gene>
    <name evidence="2" type="primary">infB</name>
    <name type="ordered locus">CC_0042</name>
</gene>
<proteinExistence type="inferred from homology"/>
<dbReference type="EMBL" id="AE005673">
    <property type="protein sequence ID" value="AAK22030.1"/>
    <property type="status" value="ALT_INIT"/>
    <property type="molecule type" value="Genomic_DNA"/>
</dbReference>
<dbReference type="PIR" id="B87254">
    <property type="entry name" value="B87254"/>
</dbReference>
<dbReference type="RefSeq" id="NP_418862.1">
    <property type="nucleotide sequence ID" value="NC_002696.2"/>
</dbReference>
<dbReference type="RefSeq" id="WP_024265492.1">
    <property type="nucleotide sequence ID" value="NC_002696.2"/>
</dbReference>
<dbReference type="SMR" id="Q9AC25"/>
<dbReference type="STRING" id="190650.CC_0042"/>
<dbReference type="EnsemblBacteria" id="AAK22030">
    <property type="protein sequence ID" value="AAK22030"/>
    <property type="gene ID" value="CC_0042"/>
</dbReference>
<dbReference type="KEGG" id="ccr:CC_0042"/>
<dbReference type="PATRIC" id="fig|190650.5.peg.41"/>
<dbReference type="eggNOG" id="COG0532">
    <property type="taxonomic scope" value="Bacteria"/>
</dbReference>
<dbReference type="HOGENOM" id="CLU_006301_10_1_5"/>
<dbReference type="Proteomes" id="UP000001816">
    <property type="component" value="Chromosome"/>
</dbReference>
<dbReference type="GO" id="GO:0005829">
    <property type="term" value="C:cytosol"/>
    <property type="evidence" value="ECO:0007669"/>
    <property type="project" value="TreeGrafter"/>
</dbReference>
<dbReference type="GO" id="GO:0005525">
    <property type="term" value="F:GTP binding"/>
    <property type="evidence" value="ECO:0007669"/>
    <property type="project" value="UniProtKB-KW"/>
</dbReference>
<dbReference type="GO" id="GO:0003924">
    <property type="term" value="F:GTPase activity"/>
    <property type="evidence" value="ECO:0007669"/>
    <property type="project" value="UniProtKB-UniRule"/>
</dbReference>
<dbReference type="GO" id="GO:0097216">
    <property type="term" value="F:guanosine tetraphosphate binding"/>
    <property type="evidence" value="ECO:0007669"/>
    <property type="project" value="UniProtKB-ARBA"/>
</dbReference>
<dbReference type="GO" id="GO:0003743">
    <property type="term" value="F:translation initiation factor activity"/>
    <property type="evidence" value="ECO:0007669"/>
    <property type="project" value="UniProtKB-UniRule"/>
</dbReference>
<dbReference type="CDD" id="cd01887">
    <property type="entry name" value="IF2_eIF5B"/>
    <property type="match status" value="1"/>
</dbReference>
<dbReference type="CDD" id="cd03702">
    <property type="entry name" value="IF2_mtIF2_II"/>
    <property type="match status" value="1"/>
</dbReference>
<dbReference type="CDD" id="cd03692">
    <property type="entry name" value="mtIF2_IVc"/>
    <property type="match status" value="1"/>
</dbReference>
<dbReference type="FunFam" id="2.40.30.10:FF:000007">
    <property type="entry name" value="Translation initiation factor IF-2"/>
    <property type="match status" value="1"/>
</dbReference>
<dbReference type="FunFam" id="2.40.30.10:FF:000008">
    <property type="entry name" value="Translation initiation factor IF-2"/>
    <property type="match status" value="1"/>
</dbReference>
<dbReference type="FunFam" id="3.40.50.10050:FF:000001">
    <property type="entry name" value="Translation initiation factor IF-2"/>
    <property type="match status" value="1"/>
</dbReference>
<dbReference type="FunFam" id="3.40.50.300:FF:000019">
    <property type="entry name" value="Translation initiation factor IF-2"/>
    <property type="match status" value="1"/>
</dbReference>
<dbReference type="Gene3D" id="3.40.50.300">
    <property type="entry name" value="P-loop containing nucleotide triphosphate hydrolases"/>
    <property type="match status" value="1"/>
</dbReference>
<dbReference type="Gene3D" id="2.40.30.10">
    <property type="entry name" value="Translation factors"/>
    <property type="match status" value="2"/>
</dbReference>
<dbReference type="Gene3D" id="3.40.50.10050">
    <property type="entry name" value="Translation initiation factor IF- 2, domain 3"/>
    <property type="match status" value="1"/>
</dbReference>
<dbReference type="HAMAP" id="MF_00100_B">
    <property type="entry name" value="IF_2_B"/>
    <property type="match status" value="1"/>
</dbReference>
<dbReference type="InterPro" id="IPR053905">
    <property type="entry name" value="EF-G-like_DII"/>
</dbReference>
<dbReference type="InterPro" id="IPR004161">
    <property type="entry name" value="EFTu-like_2"/>
</dbReference>
<dbReference type="InterPro" id="IPR013575">
    <property type="entry name" value="IF2_assoc_dom_bac"/>
</dbReference>
<dbReference type="InterPro" id="IPR044145">
    <property type="entry name" value="IF2_II"/>
</dbReference>
<dbReference type="InterPro" id="IPR006847">
    <property type="entry name" value="IF2_N"/>
</dbReference>
<dbReference type="InterPro" id="IPR027417">
    <property type="entry name" value="P-loop_NTPase"/>
</dbReference>
<dbReference type="InterPro" id="IPR005225">
    <property type="entry name" value="Small_GTP-bd"/>
</dbReference>
<dbReference type="InterPro" id="IPR000795">
    <property type="entry name" value="T_Tr_GTP-bd_dom"/>
</dbReference>
<dbReference type="InterPro" id="IPR000178">
    <property type="entry name" value="TF_IF2_bacterial-like"/>
</dbReference>
<dbReference type="InterPro" id="IPR015760">
    <property type="entry name" value="TIF_IF2"/>
</dbReference>
<dbReference type="InterPro" id="IPR023115">
    <property type="entry name" value="TIF_IF2_dom3"/>
</dbReference>
<dbReference type="InterPro" id="IPR036925">
    <property type="entry name" value="TIF_IF2_dom3_sf"/>
</dbReference>
<dbReference type="InterPro" id="IPR009000">
    <property type="entry name" value="Transl_B-barrel_sf"/>
</dbReference>
<dbReference type="NCBIfam" id="TIGR00487">
    <property type="entry name" value="IF-2"/>
    <property type="match status" value="1"/>
</dbReference>
<dbReference type="NCBIfam" id="TIGR00231">
    <property type="entry name" value="small_GTP"/>
    <property type="match status" value="1"/>
</dbReference>
<dbReference type="PANTHER" id="PTHR43381:SF5">
    <property type="entry name" value="TR-TYPE G DOMAIN-CONTAINING PROTEIN"/>
    <property type="match status" value="1"/>
</dbReference>
<dbReference type="PANTHER" id="PTHR43381">
    <property type="entry name" value="TRANSLATION INITIATION FACTOR IF-2-RELATED"/>
    <property type="match status" value="1"/>
</dbReference>
<dbReference type="Pfam" id="PF22042">
    <property type="entry name" value="EF-G_D2"/>
    <property type="match status" value="1"/>
</dbReference>
<dbReference type="Pfam" id="PF00009">
    <property type="entry name" value="GTP_EFTU"/>
    <property type="match status" value="1"/>
</dbReference>
<dbReference type="Pfam" id="PF03144">
    <property type="entry name" value="GTP_EFTU_D2"/>
    <property type="match status" value="1"/>
</dbReference>
<dbReference type="Pfam" id="PF11987">
    <property type="entry name" value="IF-2"/>
    <property type="match status" value="1"/>
</dbReference>
<dbReference type="Pfam" id="PF08364">
    <property type="entry name" value="IF2_assoc"/>
    <property type="match status" value="1"/>
</dbReference>
<dbReference type="Pfam" id="PF04760">
    <property type="entry name" value="IF2_N"/>
    <property type="match status" value="1"/>
</dbReference>
<dbReference type="SUPFAM" id="SSF52156">
    <property type="entry name" value="Initiation factor IF2/eIF5b, domain 3"/>
    <property type="match status" value="1"/>
</dbReference>
<dbReference type="SUPFAM" id="SSF52540">
    <property type="entry name" value="P-loop containing nucleoside triphosphate hydrolases"/>
    <property type="match status" value="1"/>
</dbReference>
<dbReference type="SUPFAM" id="SSF50447">
    <property type="entry name" value="Translation proteins"/>
    <property type="match status" value="2"/>
</dbReference>
<dbReference type="PROSITE" id="PS51722">
    <property type="entry name" value="G_TR_2"/>
    <property type="match status" value="1"/>
</dbReference>
<dbReference type="PROSITE" id="PS01176">
    <property type="entry name" value="IF2"/>
    <property type="match status" value="1"/>
</dbReference>
<feature type="chain" id="PRO_0000137186" description="Translation initiation factor IF-2">
    <location>
        <begin position="1"/>
        <end position="1009"/>
    </location>
</feature>
<feature type="domain" description="tr-type G">
    <location>
        <begin position="505"/>
        <end position="675"/>
    </location>
</feature>
<feature type="region of interest" description="Disordered" evidence="3">
    <location>
        <begin position="1"/>
        <end position="415"/>
    </location>
</feature>
<feature type="region of interest" description="G1" evidence="1">
    <location>
        <begin position="514"/>
        <end position="521"/>
    </location>
</feature>
<feature type="region of interest" description="G2" evidence="1">
    <location>
        <begin position="539"/>
        <end position="543"/>
    </location>
</feature>
<feature type="region of interest" description="G3" evidence="1">
    <location>
        <begin position="561"/>
        <end position="564"/>
    </location>
</feature>
<feature type="region of interest" description="G4" evidence="1">
    <location>
        <begin position="615"/>
        <end position="618"/>
    </location>
</feature>
<feature type="region of interest" description="G5" evidence="1">
    <location>
        <begin position="651"/>
        <end position="653"/>
    </location>
</feature>
<feature type="compositionally biased region" description="Basic and acidic residues" evidence="3">
    <location>
        <begin position="94"/>
        <end position="110"/>
    </location>
</feature>
<feature type="compositionally biased region" description="Low complexity" evidence="3">
    <location>
        <begin position="111"/>
        <end position="121"/>
    </location>
</feature>
<feature type="compositionally biased region" description="Basic and acidic residues" evidence="3">
    <location>
        <begin position="122"/>
        <end position="136"/>
    </location>
</feature>
<feature type="compositionally biased region" description="Low complexity" evidence="3">
    <location>
        <begin position="137"/>
        <end position="146"/>
    </location>
</feature>
<feature type="compositionally biased region" description="Pro residues" evidence="3">
    <location>
        <begin position="147"/>
        <end position="174"/>
    </location>
</feature>
<feature type="compositionally biased region" description="Low complexity" evidence="3">
    <location>
        <begin position="175"/>
        <end position="189"/>
    </location>
</feature>
<feature type="compositionally biased region" description="Basic and acidic residues" evidence="3">
    <location>
        <begin position="208"/>
        <end position="218"/>
    </location>
</feature>
<feature type="compositionally biased region" description="Basic and acidic residues" evidence="3">
    <location>
        <begin position="251"/>
        <end position="287"/>
    </location>
</feature>
<feature type="compositionally biased region" description="Pro residues" evidence="3">
    <location>
        <begin position="311"/>
        <end position="320"/>
    </location>
</feature>
<feature type="compositionally biased region" description="Basic and acidic residues" evidence="3">
    <location>
        <begin position="346"/>
        <end position="358"/>
    </location>
</feature>
<feature type="compositionally biased region" description="Basic and acidic residues" evidence="3">
    <location>
        <begin position="403"/>
        <end position="415"/>
    </location>
</feature>
<feature type="binding site" evidence="2">
    <location>
        <begin position="514"/>
        <end position="521"/>
    </location>
    <ligand>
        <name>GTP</name>
        <dbReference type="ChEBI" id="CHEBI:37565"/>
    </ligand>
</feature>
<feature type="binding site" evidence="2">
    <location>
        <begin position="561"/>
        <end position="565"/>
    </location>
    <ligand>
        <name>GTP</name>
        <dbReference type="ChEBI" id="CHEBI:37565"/>
    </ligand>
</feature>
<feature type="binding site" evidence="2">
    <location>
        <begin position="615"/>
        <end position="618"/>
    </location>
    <ligand>
        <name>GTP</name>
        <dbReference type="ChEBI" id="CHEBI:37565"/>
    </ligand>
</feature>
<evidence type="ECO:0000250" key="1"/>
<evidence type="ECO:0000255" key="2">
    <source>
        <dbReference type="HAMAP-Rule" id="MF_00100"/>
    </source>
</evidence>
<evidence type="ECO:0000256" key="3">
    <source>
        <dbReference type="SAM" id="MobiDB-lite"/>
    </source>
</evidence>
<evidence type="ECO:0000305" key="4"/>
<comment type="function">
    <text evidence="2">One of the essential components for the initiation of protein synthesis. Protects formylmethionyl-tRNA from spontaneous hydrolysis and promotes its binding to the 30S ribosomal subunits. Also involved in the hydrolysis of GTP during the formation of the 70S ribosomal complex.</text>
</comment>
<comment type="subcellular location">
    <subcellularLocation>
        <location evidence="2">Cytoplasm</location>
    </subcellularLocation>
</comment>
<comment type="similarity">
    <text evidence="2">Belongs to the TRAFAC class translation factor GTPase superfamily. Classic translation factor GTPase family. IF-2 subfamily.</text>
</comment>
<comment type="sequence caution" evidence="4">
    <conflict type="erroneous initiation">
        <sequence resource="EMBL-CDS" id="AAK22030"/>
    </conflict>
</comment>
<reference key="1">
    <citation type="journal article" date="2001" name="Proc. Natl. Acad. Sci. U.S.A.">
        <title>Complete genome sequence of Caulobacter crescentus.</title>
        <authorList>
            <person name="Nierman W.C."/>
            <person name="Feldblyum T.V."/>
            <person name="Laub M.T."/>
            <person name="Paulsen I.T."/>
            <person name="Nelson K.E."/>
            <person name="Eisen J.A."/>
            <person name="Heidelberg J.F."/>
            <person name="Alley M.R.K."/>
            <person name="Ohta N."/>
            <person name="Maddock J.R."/>
            <person name="Potocka I."/>
            <person name="Nelson W.C."/>
            <person name="Newton A."/>
            <person name="Stephens C."/>
            <person name="Phadke N.D."/>
            <person name="Ely B."/>
            <person name="DeBoy R.T."/>
            <person name="Dodson R.J."/>
            <person name="Durkin A.S."/>
            <person name="Gwinn M.L."/>
            <person name="Haft D.H."/>
            <person name="Kolonay J.F."/>
            <person name="Smit J."/>
            <person name="Craven M.B."/>
            <person name="Khouri H.M."/>
            <person name="Shetty J."/>
            <person name="Berry K.J."/>
            <person name="Utterback T.R."/>
            <person name="Tran K."/>
            <person name="Wolf A.M."/>
            <person name="Vamathevan J.J."/>
            <person name="Ermolaeva M.D."/>
            <person name="White O."/>
            <person name="Salzberg S.L."/>
            <person name="Venter J.C."/>
            <person name="Shapiro L."/>
            <person name="Fraser C.M."/>
        </authorList>
    </citation>
    <scope>NUCLEOTIDE SEQUENCE [LARGE SCALE GENOMIC DNA]</scope>
    <source>
        <strain>ATCC 19089 / CIP 103742 / CB 15</strain>
    </source>
</reference>
<sequence length="1009" mass="107460">MSDENENGRPGGRTPMTLKPRQGSVSAGVVKQSFSHGRTKTVVVETKRTRTHAPASGNLAAPSSAERRHGEAPAPRPAPPQGGGGGSAGGLSQEELRARQRVVDAAREAQARQVAEQAAAEARARAAQEAAQREAAAKAAAERAAAAPPPVAQAPAAPAPAAPVTPPPAAPQAPRPVAQAPVAPSAPRQDAPRQDTRAAAPGQTRTYEPSRDRRDDRPSTTTYRPAPQGDRPFNQRAPRPDANANFGQRAPRPEGDRPRGPRPDGDRPQGDRGGYRGDRPQGDRPQGDRPQQTVRYSALAPRPAPGARGPGGPPRGPRPGVPAAAPATPEIQRATRSAPRPGGGAMDRRPDEDDDRRKNAAPNKAVSRVKGAPQRREGRLTIQAVAGDGDSADRMRSLASVRRAREREKEKRRGGAVEQARVAREVVIPDVITVQELSNRMAVRGVDIIKFLMRQGVMLKINDVIDNDTAELVATEFGHTVKRVSEADVEEGFIGADDHDEHMDLRPPVVTIMGHVDHGKTSLLDALRSTDVAAGEAGGITQHIGAYQVRLKDGQRVTFLDTPGHAAFSSMRARGANITDIVVLVVAGDDGVMPQTIEAIKHAKAAEVPIIVAVNKMDKPGSDPTRVVNELLQHEIVVESLGGDTQLIEVSAKARTGLDNLLEAILLQAEVLDLKANPDRSADGVVIEAKLDKGRGAVSTVLVNRGTLKRGDIVVAGSQWGKVRALLNERNEQLQEAGPATPVEILGLDGVPSPGDAFAVVENEARARELTEYRIRLKREKSMAPVGAGASMADMMAKLQDKKLKELPLVIKADVQGSAEAIIGSLDKMATDEVRARIILSGAGAISESDVMLAKGAGAPVIGFNVRASAQARALAEREGVEIRYYAIIYDLLDDIKGVLSGMLAPIQRETFLGNAEVLQAFDISKIGKVAGCKVTEGVVRKGAKVRIIRQDIVVLELGTLQTLKRFKDEVNEVPVGQECGMMFAGFQDIKVGDTIECFTVEEIKRQLD</sequence>
<protein>
    <recommendedName>
        <fullName evidence="2">Translation initiation factor IF-2</fullName>
    </recommendedName>
</protein>
<name>IF2_CAUVC</name>
<organism>
    <name type="scientific">Caulobacter vibrioides (strain ATCC 19089 / CIP 103742 / CB 15)</name>
    <name type="common">Caulobacter crescentus</name>
    <dbReference type="NCBI Taxonomy" id="190650"/>
    <lineage>
        <taxon>Bacteria</taxon>
        <taxon>Pseudomonadati</taxon>
        <taxon>Pseudomonadota</taxon>
        <taxon>Alphaproteobacteria</taxon>
        <taxon>Caulobacterales</taxon>
        <taxon>Caulobacteraceae</taxon>
        <taxon>Caulobacter</taxon>
    </lineage>
</organism>
<keyword id="KW-0963">Cytoplasm</keyword>
<keyword id="KW-0342">GTP-binding</keyword>
<keyword id="KW-0396">Initiation factor</keyword>
<keyword id="KW-0547">Nucleotide-binding</keyword>
<keyword id="KW-0648">Protein biosynthesis</keyword>
<keyword id="KW-1185">Reference proteome</keyword>